<reference key="1">
    <citation type="journal article" date="1998" name="Science">
        <title>Complete genome sequence of Treponema pallidum, the syphilis spirochete.</title>
        <authorList>
            <person name="Fraser C.M."/>
            <person name="Norris S.J."/>
            <person name="Weinstock G.M."/>
            <person name="White O."/>
            <person name="Sutton G.G."/>
            <person name="Dodson R.J."/>
            <person name="Gwinn M.L."/>
            <person name="Hickey E.K."/>
            <person name="Clayton R.A."/>
            <person name="Ketchum K.A."/>
            <person name="Sodergren E."/>
            <person name="Hardham J.M."/>
            <person name="McLeod M.P."/>
            <person name="Salzberg S.L."/>
            <person name="Peterson J.D."/>
            <person name="Khalak H.G."/>
            <person name="Richardson D.L."/>
            <person name="Howell J.K."/>
            <person name="Chidambaram M."/>
            <person name="Utterback T.R."/>
            <person name="McDonald L.A."/>
            <person name="Artiach P."/>
            <person name="Bowman C."/>
            <person name="Cotton M.D."/>
            <person name="Fujii C."/>
            <person name="Garland S.A."/>
            <person name="Hatch B."/>
            <person name="Horst K."/>
            <person name="Roberts K.M."/>
            <person name="Sandusky M."/>
            <person name="Weidman J.F."/>
            <person name="Smith H.O."/>
            <person name="Venter J.C."/>
        </authorList>
    </citation>
    <scope>NUCLEOTIDE SEQUENCE [LARGE SCALE GENOMIC DNA]</scope>
    <source>
        <strain>Nichols</strain>
    </source>
</reference>
<name>RL21_TREPA</name>
<sequence>MYALIEYKGKQYKVERGSSIVVDNISEVAPGGCIDVREVLMIGGEGLTRIGSPYLEGVGVRAVVGECFRSRKITVYKYKSKKDYHRTIGHRQWYTRLTVSDILGV</sequence>
<feature type="chain" id="PRO_0000181019" description="Large ribosomal subunit protein bL21">
    <location>
        <begin position="1"/>
        <end position="105"/>
    </location>
</feature>
<protein>
    <recommendedName>
        <fullName evidence="1">Large ribosomal subunit protein bL21</fullName>
    </recommendedName>
    <alternativeName>
        <fullName evidence="2">50S ribosomal protein L21</fullName>
    </alternativeName>
</protein>
<keyword id="KW-1185">Reference proteome</keyword>
<keyword id="KW-0687">Ribonucleoprotein</keyword>
<keyword id="KW-0689">Ribosomal protein</keyword>
<keyword id="KW-0694">RNA-binding</keyword>
<keyword id="KW-0699">rRNA-binding</keyword>
<proteinExistence type="inferred from homology"/>
<gene>
    <name evidence="1" type="primary">rplU</name>
    <name type="ordered locus">TP_0745</name>
</gene>
<evidence type="ECO:0000255" key="1">
    <source>
        <dbReference type="HAMAP-Rule" id="MF_01363"/>
    </source>
</evidence>
<evidence type="ECO:0000305" key="2"/>
<accession>O83727</accession>
<comment type="function">
    <text evidence="1">This protein binds to 23S rRNA in the presence of protein L20.</text>
</comment>
<comment type="subunit">
    <text evidence="1">Part of the 50S ribosomal subunit. Contacts protein L20.</text>
</comment>
<comment type="similarity">
    <text evidence="1">Belongs to the bacterial ribosomal protein bL21 family.</text>
</comment>
<dbReference type="EMBL" id="AE000520">
    <property type="protein sequence ID" value="AAC65713.1"/>
    <property type="molecule type" value="Genomic_DNA"/>
</dbReference>
<dbReference type="PIR" id="F71286">
    <property type="entry name" value="F71286"/>
</dbReference>
<dbReference type="RefSeq" id="WP_010882190.1">
    <property type="nucleotide sequence ID" value="NC_021490.2"/>
</dbReference>
<dbReference type="SMR" id="O83727"/>
<dbReference type="STRING" id="243276.TP_0745"/>
<dbReference type="EnsemblBacteria" id="AAC65713">
    <property type="protein sequence ID" value="AAC65713"/>
    <property type="gene ID" value="TP_0745"/>
</dbReference>
<dbReference type="GeneID" id="93876513"/>
<dbReference type="KEGG" id="tpa:TP_0745"/>
<dbReference type="KEGG" id="tpw:TPANIC_0745"/>
<dbReference type="eggNOG" id="COG0261">
    <property type="taxonomic scope" value="Bacteria"/>
</dbReference>
<dbReference type="HOGENOM" id="CLU_061463_3_3_12"/>
<dbReference type="Proteomes" id="UP000000811">
    <property type="component" value="Chromosome"/>
</dbReference>
<dbReference type="GO" id="GO:0005737">
    <property type="term" value="C:cytoplasm"/>
    <property type="evidence" value="ECO:0007669"/>
    <property type="project" value="UniProtKB-ARBA"/>
</dbReference>
<dbReference type="GO" id="GO:1990904">
    <property type="term" value="C:ribonucleoprotein complex"/>
    <property type="evidence" value="ECO:0007669"/>
    <property type="project" value="UniProtKB-KW"/>
</dbReference>
<dbReference type="GO" id="GO:0005840">
    <property type="term" value="C:ribosome"/>
    <property type="evidence" value="ECO:0007669"/>
    <property type="project" value="UniProtKB-KW"/>
</dbReference>
<dbReference type="GO" id="GO:0019843">
    <property type="term" value="F:rRNA binding"/>
    <property type="evidence" value="ECO:0007669"/>
    <property type="project" value="UniProtKB-UniRule"/>
</dbReference>
<dbReference type="GO" id="GO:0003735">
    <property type="term" value="F:structural constituent of ribosome"/>
    <property type="evidence" value="ECO:0007669"/>
    <property type="project" value="InterPro"/>
</dbReference>
<dbReference type="GO" id="GO:0006412">
    <property type="term" value="P:translation"/>
    <property type="evidence" value="ECO:0007669"/>
    <property type="project" value="UniProtKB-UniRule"/>
</dbReference>
<dbReference type="HAMAP" id="MF_01363">
    <property type="entry name" value="Ribosomal_bL21"/>
    <property type="match status" value="1"/>
</dbReference>
<dbReference type="InterPro" id="IPR028909">
    <property type="entry name" value="bL21-like"/>
</dbReference>
<dbReference type="InterPro" id="IPR036164">
    <property type="entry name" value="bL21-like_sf"/>
</dbReference>
<dbReference type="InterPro" id="IPR001787">
    <property type="entry name" value="Ribosomal_bL21"/>
</dbReference>
<dbReference type="InterPro" id="IPR018258">
    <property type="entry name" value="Ribosomal_bL21_CS"/>
</dbReference>
<dbReference type="NCBIfam" id="TIGR00061">
    <property type="entry name" value="L21"/>
    <property type="match status" value="1"/>
</dbReference>
<dbReference type="PANTHER" id="PTHR21349">
    <property type="entry name" value="50S RIBOSOMAL PROTEIN L21"/>
    <property type="match status" value="1"/>
</dbReference>
<dbReference type="PANTHER" id="PTHR21349:SF0">
    <property type="entry name" value="LARGE RIBOSOMAL SUBUNIT PROTEIN BL21M"/>
    <property type="match status" value="1"/>
</dbReference>
<dbReference type="Pfam" id="PF00829">
    <property type="entry name" value="Ribosomal_L21p"/>
    <property type="match status" value="1"/>
</dbReference>
<dbReference type="SUPFAM" id="SSF141091">
    <property type="entry name" value="L21p-like"/>
    <property type="match status" value="1"/>
</dbReference>
<dbReference type="PROSITE" id="PS01169">
    <property type="entry name" value="RIBOSOMAL_L21"/>
    <property type="match status" value="1"/>
</dbReference>
<organism>
    <name type="scientific">Treponema pallidum (strain Nichols)</name>
    <dbReference type="NCBI Taxonomy" id="243276"/>
    <lineage>
        <taxon>Bacteria</taxon>
        <taxon>Pseudomonadati</taxon>
        <taxon>Spirochaetota</taxon>
        <taxon>Spirochaetia</taxon>
        <taxon>Spirochaetales</taxon>
        <taxon>Treponemataceae</taxon>
        <taxon>Treponema</taxon>
    </lineage>
</organism>